<dbReference type="EMBL" id="AB054096">
    <property type="protein sequence ID" value="BAB62074.1"/>
    <property type="molecule type" value="mRNA"/>
</dbReference>
<dbReference type="EMBL" id="AF145045">
    <property type="protein sequence ID" value="AAD33946.1"/>
    <property type="molecule type" value="mRNA"/>
</dbReference>
<dbReference type="EMBL" id="AC006837">
    <property type="protein sequence ID" value="AAF18659.2"/>
    <property type="molecule type" value="Genomic_DNA"/>
</dbReference>
<dbReference type="EMBL" id="CP002685">
    <property type="protein sequence ID" value="AEC05402.1"/>
    <property type="molecule type" value="Genomic_DNA"/>
</dbReference>
<dbReference type="EMBL" id="AF360172">
    <property type="protein sequence ID" value="AAK25882.1"/>
    <property type="molecule type" value="mRNA"/>
</dbReference>
<dbReference type="EMBL" id="AY056347">
    <property type="protein sequence ID" value="AAL07196.1"/>
    <property type="molecule type" value="mRNA"/>
</dbReference>
<dbReference type="EMBL" id="AY084784">
    <property type="protein sequence ID" value="AAM61351.1"/>
    <property type="molecule type" value="mRNA"/>
</dbReference>
<dbReference type="PIR" id="T44583">
    <property type="entry name" value="T44583"/>
</dbReference>
<dbReference type="RefSeq" id="NP_565252.1">
    <property type="nucleotide sequence ID" value="NM_126173.4"/>
</dbReference>
<dbReference type="SMR" id="Q9SJV5"/>
<dbReference type="FunCoup" id="Q9SJV5">
    <property type="interactions" value="899"/>
</dbReference>
<dbReference type="STRING" id="3702.Q9SJV5"/>
<dbReference type="TCDB" id="2.A.64.2.1">
    <property type="family name" value="the twin arginine targeting (tat) family"/>
</dbReference>
<dbReference type="PaxDb" id="3702-AT2G01110.1"/>
<dbReference type="ProteomicsDB" id="234182"/>
<dbReference type="EnsemblPlants" id="AT2G01110.1">
    <property type="protein sequence ID" value="AT2G01110.1"/>
    <property type="gene ID" value="AT2G01110"/>
</dbReference>
<dbReference type="GeneID" id="814640"/>
<dbReference type="Gramene" id="AT2G01110.1">
    <property type="protein sequence ID" value="AT2G01110.1"/>
    <property type="gene ID" value="AT2G01110"/>
</dbReference>
<dbReference type="KEGG" id="ath:AT2G01110"/>
<dbReference type="Araport" id="AT2G01110"/>
<dbReference type="TAIR" id="AT2G01110">
    <property type="gene designation" value="APG2"/>
</dbReference>
<dbReference type="eggNOG" id="ENOG502QVCB">
    <property type="taxonomic scope" value="Eukaryota"/>
</dbReference>
<dbReference type="HOGENOM" id="CLU_031942_2_0_1"/>
<dbReference type="InParanoid" id="Q9SJV5"/>
<dbReference type="OMA" id="AWAFIAP"/>
<dbReference type="OrthoDB" id="36838at2759"/>
<dbReference type="PhylomeDB" id="Q9SJV5"/>
<dbReference type="PRO" id="PR:Q9SJV5"/>
<dbReference type="Proteomes" id="UP000006548">
    <property type="component" value="Chromosome 2"/>
</dbReference>
<dbReference type="ExpressionAtlas" id="Q9SJV5">
    <property type="expression patterns" value="baseline and differential"/>
</dbReference>
<dbReference type="GO" id="GO:0009507">
    <property type="term" value="C:chloroplast"/>
    <property type="evidence" value="ECO:0007005"/>
    <property type="project" value="TAIR"/>
</dbReference>
<dbReference type="GO" id="GO:0009535">
    <property type="term" value="C:chloroplast thylakoid membrane"/>
    <property type="evidence" value="ECO:0000314"/>
    <property type="project" value="TAIR"/>
</dbReference>
<dbReference type="GO" id="GO:0043235">
    <property type="term" value="C:receptor complex"/>
    <property type="evidence" value="ECO:0000314"/>
    <property type="project" value="TAIR"/>
</dbReference>
<dbReference type="GO" id="GO:0033281">
    <property type="term" value="C:TAT protein transport complex"/>
    <property type="evidence" value="ECO:0000314"/>
    <property type="project" value="UniProtKB"/>
</dbReference>
<dbReference type="GO" id="GO:0009977">
    <property type="term" value="F:proton motive force dependent protein transmembrane transporter activity"/>
    <property type="evidence" value="ECO:0000250"/>
    <property type="project" value="TAIR"/>
</dbReference>
<dbReference type="GO" id="GO:0009567">
    <property type="term" value="P:double fertilization forming a zygote and endosperm"/>
    <property type="evidence" value="ECO:0000315"/>
    <property type="project" value="TAIR"/>
</dbReference>
<dbReference type="GO" id="GO:0010027">
    <property type="term" value="P:thylakoid membrane organization"/>
    <property type="evidence" value="ECO:0000315"/>
    <property type="project" value="TAIR"/>
</dbReference>
<dbReference type="HAMAP" id="MF_00902">
    <property type="entry name" value="TatC"/>
    <property type="match status" value="1"/>
</dbReference>
<dbReference type="InterPro" id="IPR019820">
    <property type="entry name" value="Sec-indep_translocase_CS"/>
</dbReference>
<dbReference type="InterPro" id="IPR002033">
    <property type="entry name" value="TatC"/>
</dbReference>
<dbReference type="NCBIfam" id="TIGR00945">
    <property type="entry name" value="tatC"/>
    <property type="match status" value="1"/>
</dbReference>
<dbReference type="PANTHER" id="PTHR30371">
    <property type="entry name" value="SEC-INDEPENDENT PROTEIN TRANSLOCASE PROTEIN TATC"/>
    <property type="match status" value="1"/>
</dbReference>
<dbReference type="PANTHER" id="PTHR30371:SF0">
    <property type="entry name" value="SEC-INDEPENDENT PROTEIN TRANSLOCASE PROTEIN TATC, CHLOROPLASTIC-RELATED"/>
    <property type="match status" value="1"/>
</dbReference>
<dbReference type="Pfam" id="PF00902">
    <property type="entry name" value="TatC"/>
    <property type="match status" value="1"/>
</dbReference>
<dbReference type="PRINTS" id="PR01840">
    <property type="entry name" value="TATCFAMILY"/>
</dbReference>
<dbReference type="PROSITE" id="PS01218">
    <property type="entry name" value="TATC"/>
    <property type="match status" value="1"/>
</dbReference>
<sequence length="340" mass="37367">MSSTSTSSALIHHFRLTTRNLGSPTKQRCPYAVTFCNSWREAGLRYSVTQRRSKGFGPVSALNDDDSPTETTPGVGSAVEDRPPDSSEDRSSSVYEFLYPRKEELPDDKEMTIFDHLEELRERIFVSVLAVGAAILGCFAFSKDLIVFLEAPVKTQGVRFLQLAPGEFFFTTLKVSGYCGLLLGSPVILYEIIAFVLPGLTRAERRFLGPIVFGSSLLFYAGLAFSYWVLTPAALNFFVNYAEGVVESLWSIDQYFEFVLVLMFSTGLSFQVPVIQLLLGQVGVVSGDQMLSIWRYVVVGAVVAAAVVTPSTDPVTQMLLATPLLGLYLGGAWMVKLTGR</sequence>
<gene>
    <name type="primary">TATC</name>
    <name type="synonym">APG2</name>
    <name type="synonym">UNE3</name>
    <name type="ordered locus">At2g01110</name>
    <name type="ORF">F23H14.8</name>
</gene>
<protein>
    <recommendedName>
        <fullName>Sec-independent protein translocase protein TATC, chloroplastic</fullName>
    </recommendedName>
    <alternativeName>
        <fullName>Protein ALBINO AND PALE GREEN 2</fullName>
    </alternativeName>
    <alternativeName>
        <fullName>Protein TWIN-ARGININE TRANSLOCATION C</fullName>
    </alternativeName>
    <alternativeName>
        <fullName>Protein UNFERTILIZED EMBRYO SAC 3</fullName>
    </alternativeName>
</protein>
<evidence type="ECO:0000250" key="1"/>
<evidence type="ECO:0000255" key="2"/>
<evidence type="ECO:0000256" key="3">
    <source>
        <dbReference type="SAM" id="MobiDB-lite"/>
    </source>
</evidence>
<evidence type="ECO:0000269" key="4">
    <source>
    </source>
</evidence>
<evidence type="ECO:0000269" key="5">
    <source>
    </source>
</evidence>
<evidence type="ECO:0000305" key="6"/>
<evidence type="ECO:0000305" key="7">
    <source>
    </source>
</evidence>
<feature type="transit peptide" description="Chloroplast" evidence="2">
    <location>
        <begin position="1"/>
        <end position="28"/>
    </location>
</feature>
<feature type="transit peptide" description="Thylakoid" evidence="6">
    <location>
        <begin position="29"/>
        <end position="60"/>
    </location>
</feature>
<feature type="chain" id="PRO_0000419910" description="Sec-independent protein translocase protein TATC, chloroplastic">
    <location>
        <begin position="61"/>
        <end position="340"/>
    </location>
</feature>
<feature type="topological domain" description="Stromal" evidence="2">
    <location>
        <begin position="61"/>
        <end position="127"/>
    </location>
</feature>
<feature type="transmembrane region" description="Helical" evidence="2">
    <location>
        <begin position="128"/>
        <end position="148"/>
    </location>
</feature>
<feature type="topological domain" description="Lumenal" evidence="2">
    <location>
        <begin position="149"/>
        <end position="179"/>
    </location>
</feature>
<feature type="transmembrane region" description="Helical" evidence="2">
    <location>
        <begin position="180"/>
        <end position="200"/>
    </location>
</feature>
<feature type="topological domain" description="Stromal" evidence="2">
    <location>
        <begin position="201"/>
        <end position="209"/>
    </location>
</feature>
<feature type="transmembrane region" description="Helical" evidence="2">
    <location>
        <begin position="210"/>
        <end position="230"/>
    </location>
</feature>
<feature type="topological domain" description="Lumenal" evidence="2">
    <location>
        <begin position="231"/>
        <end position="257"/>
    </location>
</feature>
<feature type="transmembrane region" description="Helical" evidence="2">
    <location>
        <begin position="258"/>
        <end position="278"/>
    </location>
</feature>
<feature type="topological domain" description="Stromal" evidence="2">
    <location>
        <begin position="279"/>
        <end position="289"/>
    </location>
</feature>
<feature type="transmembrane region" description="Helical" evidence="2">
    <location>
        <begin position="290"/>
        <end position="310"/>
    </location>
</feature>
<feature type="topological domain" description="Lumenal" evidence="2">
    <location>
        <begin position="311"/>
        <end position="314"/>
    </location>
</feature>
<feature type="transmembrane region" description="Helical" evidence="2">
    <location>
        <begin position="315"/>
        <end position="335"/>
    </location>
</feature>
<feature type="topological domain" description="Stromal" evidence="2">
    <location>
        <begin position="336"/>
        <end position="340"/>
    </location>
</feature>
<feature type="region of interest" description="Disordered" evidence="3">
    <location>
        <begin position="57"/>
        <end position="92"/>
    </location>
</feature>
<feature type="compositionally biased region" description="Basic and acidic residues" evidence="3">
    <location>
        <begin position="79"/>
        <end position="91"/>
    </location>
</feature>
<organism>
    <name type="scientific">Arabidopsis thaliana</name>
    <name type="common">Mouse-ear cress</name>
    <dbReference type="NCBI Taxonomy" id="3702"/>
    <lineage>
        <taxon>Eukaryota</taxon>
        <taxon>Viridiplantae</taxon>
        <taxon>Streptophyta</taxon>
        <taxon>Embryophyta</taxon>
        <taxon>Tracheophyta</taxon>
        <taxon>Spermatophyta</taxon>
        <taxon>Magnoliopsida</taxon>
        <taxon>eudicotyledons</taxon>
        <taxon>Gunneridae</taxon>
        <taxon>Pentapetalae</taxon>
        <taxon>rosids</taxon>
        <taxon>malvids</taxon>
        <taxon>Brassicales</taxon>
        <taxon>Brassicaceae</taxon>
        <taxon>Camelineae</taxon>
        <taxon>Arabidopsis</taxon>
    </lineage>
</organism>
<name>TATC_ARATH</name>
<reference key="1">
    <citation type="journal article" date="2001" name="Proc. Natl. Acad. Sci. U.S.A.">
        <title>An essential role of a TatC homologue of a Delta pH- dependent protein transporter in thylakoid membrane formation during chloroplast development in Arabidopsis thaliana.</title>
        <authorList>
            <person name="Motohashi R."/>
            <person name="Nagata N."/>
            <person name="Ito T."/>
            <person name="Takahashi S."/>
            <person name="Hobo T."/>
            <person name="Yoshida S."/>
            <person name="Shinozaki K."/>
        </authorList>
    </citation>
    <scope>NUCLEOTIDE SEQUENCE [MRNA]</scope>
    <scope>FUNCTION</scope>
    <scope>SUBCELLULAR LOCATION</scope>
    <scope>DISRUPTION PHENOTYPE</scope>
    <source>
        <strain>cv. Columbia</strain>
    </source>
</reference>
<reference key="2">
    <citation type="submission" date="1999-04" db="EMBL/GenBank/DDBJ databases">
        <title>An Arabidopsis homolog of TatC/YCF43.</title>
        <authorList>
            <person name="Summer E.J."/>
            <person name="McCaffery M.W."/>
            <person name="Cline K."/>
        </authorList>
    </citation>
    <scope>NUCLEOTIDE SEQUENCE [MRNA]</scope>
</reference>
<reference key="3">
    <citation type="journal article" date="1999" name="Nature">
        <title>Sequence and analysis of chromosome 2 of the plant Arabidopsis thaliana.</title>
        <authorList>
            <person name="Lin X."/>
            <person name="Kaul S."/>
            <person name="Rounsley S.D."/>
            <person name="Shea T.P."/>
            <person name="Benito M.-I."/>
            <person name="Town C.D."/>
            <person name="Fujii C.Y."/>
            <person name="Mason T.M."/>
            <person name="Bowman C.L."/>
            <person name="Barnstead M.E."/>
            <person name="Feldblyum T.V."/>
            <person name="Buell C.R."/>
            <person name="Ketchum K.A."/>
            <person name="Lee J.J."/>
            <person name="Ronning C.M."/>
            <person name="Koo H.L."/>
            <person name="Moffat K.S."/>
            <person name="Cronin L.A."/>
            <person name="Shen M."/>
            <person name="Pai G."/>
            <person name="Van Aken S."/>
            <person name="Umayam L."/>
            <person name="Tallon L.J."/>
            <person name="Gill J.E."/>
            <person name="Adams M.D."/>
            <person name="Carrera A.J."/>
            <person name="Creasy T.H."/>
            <person name="Goodman H.M."/>
            <person name="Somerville C.R."/>
            <person name="Copenhaver G.P."/>
            <person name="Preuss D."/>
            <person name="Nierman W.C."/>
            <person name="White O."/>
            <person name="Eisen J.A."/>
            <person name="Salzberg S.L."/>
            <person name="Fraser C.M."/>
            <person name="Venter J.C."/>
        </authorList>
    </citation>
    <scope>NUCLEOTIDE SEQUENCE [LARGE SCALE GENOMIC DNA]</scope>
    <source>
        <strain>cv. Columbia</strain>
    </source>
</reference>
<reference key="4">
    <citation type="journal article" date="2017" name="Plant J.">
        <title>Araport11: a complete reannotation of the Arabidopsis thaliana reference genome.</title>
        <authorList>
            <person name="Cheng C.Y."/>
            <person name="Krishnakumar V."/>
            <person name="Chan A.P."/>
            <person name="Thibaud-Nissen F."/>
            <person name="Schobel S."/>
            <person name="Town C.D."/>
        </authorList>
    </citation>
    <scope>GENOME REANNOTATION</scope>
    <source>
        <strain>cv. Columbia</strain>
    </source>
</reference>
<reference key="5">
    <citation type="journal article" date="2003" name="Science">
        <title>Empirical analysis of transcriptional activity in the Arabidopsis genome.</title>
        <authorList>
            <person name="Yamada K."/>
            <person name="Lim J."/>
            <person name="Dale J.M."/>
            <person name="Chen H."/>
            <person name="Shinn P."/>
            <person name="Palm C.J."/>
            <person name="Southwick A.M."/>
            <person name="Wu H.C."/>
            <person name="Kim C.J."/>
            <person name="Nguyen M."/>
            <person name="Pham P.K."/>
            <person name="Cheuk R.F."/>
            <person name="Karlin-Newmann G."/>
            <person name="Liu S.X."/>
            <person name="Lam B."/>
            <person name="Sakano H."/>
            <person name="Wu T."/>
            <person name="Yu G."/>
            <person name="Miranda M."/>
            <person name="Quach H.L."/>
            <person name="Tripp M."/>
            <person name="Chang C.H."/>
            <person name="Lee J.M."/>
            <person name="Toriumi M.J."/>
            <person name="Chan M.M."/>
            <person name="Tang C.C."/>
            <person name="Onodera C.S."/>
            <person name="Deng J.M."/>
            <person name="Akiyama K."/>
            <person name="Ansari Y."/>
            <person name="Arakawa T."/>
            <person name="Banh J."/>
            <person name="Banno F."/>
            <person name="Bowser L."/>
            <person name="Brooks S.Y."/>
            <person name="Carninci P."/>
            <person name="Chao Q."/>
            <person name="Choy N."/>
            <person name="Enju A."/>
            <person name="Goldsmith A.D."/>
            <person name="Gurjal M."/>
            <person name="Hansen N.F."/>
            <person name="Hayashizaki Y."/>
            <person name="Johnson-Hopson C."/>
            <person name="Hsuan V.W."/>
            <person name="Iida K."/>
            <person name="Karnes M."/>
            <person name="Khan S."/>
            <person name="Koesema E."/>
            <person name="Ishida J."/>
            <person name="Jiang P.X."/>
            <person name="Jones T."/>
            <person name="Kawai J."/>
            <person name="Kamiya A."/>
            <person name="Meyers C."/>
            <person name="Nakajima M."/>
            <person name="Narusaka M."/>
            <person name="Seki M."/>
            <person name="Sakurai T."/>
            <person name="Satou M."/>
            <person name="Tamse R."/>
            <person name="Vaysberg M."/>
            <person name="Wallender E.K."/>
            <person name="Wong C."/>
            <person name="Yamamura Y."/>
            <person name="Yuan S."/>
            <person name="Shinozaki K."/>
            <person name="Davis R.W."/>
            <person name="Theologis A."/>
            <person name="Ecker J.R."/>
        </authorList>
    </citation>
    <scope>NUCLEOTIDE SEQUENCE [LARGE SCALE MRNA]</scope>
    <source>
        <strain>cv. Columbia</strain>
    </source>
</reference>
<reference key="6">
    <citation type="submission" date="2002-03" db="EMBL/GenBank/DDBJ databases">
        <title>Full-length cDNA from Arabidopsis thaliana.</title>
        <authorList>
            <person name="Brover V.V."/>
            <person name="Troukhan M.E."/>
            <person name="Alexandrov N.A."/>
            <person name="Lu Y.-P."/>
            <person name="Flavell R.B."/>
            <person name="Feldmann K.A."/>
        </authorList>
    </citation>
    <scope>NUCLEOTIDE SEQUENCE [LARGE SCALE MRNA]</scope>
</reference>
<reference key="7">
    <citation type="journal article" date="2009" name="Biochim. Biophys. Acta">
        <title>Tat subunit stoichiometry in Arabidopsis thaliana challenges the proposed function of TatA as the translocation pore.</title>
        <authorList>
            <person name="Jakob M."/>
            <person name="Kaiser S."/>
            <person name="Gutensohn M."/>
            <person name="Hanner P."/>
            <person name="Kloesgen R.B."/>
        </authorList>
    </citation>
    <scope>SUBUNIT</scope>
</reference>
<accession>Q9SJV5</accession>
<accession>Q9XFI4</accession>
<proteinExistence type="evidence at protein level"/>
<comment type="function">
    <text evidence="4">Part of the twin-arginine translocation (Tat) system that transports large folded proteins containing a characteristic twin-arginine motif in their signal peptide across the thylakoid membrane. Involved in delta pH-dependent protein transport required for chloroplast development, especially thylakoid membrane formation. TATC and TATB mediate precursor recognition, whereas TATA facilitates translocation.</text>
</comment>
<comment type="subunit">
    <text evidence="5">In thylakoid membranes, TATC and TATB form a large receptor complex, containing about eight TATC-TATB pairs, which binds the precursor protein. Twin arginine signal peptide promotes pH-triggered docking of TATA oligomers to TATC-TATB receptor complex, inducing a conformational switch of TATA that results in activation of the translocase. TATA dissociates from TATC-TATB upon completion of translocation.</text>
</comment>
<comment type="subcellular location">
    <subcellularLocation>
        <location evidence="7">Plastid</location>
        <location evidence="7">Chloroplast thylakoid membrane</location>
        <topology evidence="7">Multi-pass membrane protein</topology>
    </subcellularLocation>
    <text evidence="1">The N-terminus is located in the stroma.</text>
</comment>
<comment type="disruption phenotype">
    <text evidence="4">Seedling lethality when homozygous. When grown on agar medium, mutant seedlings have an albino phenotype and contain plastid lacking internal membrane structures.</text>
</comment>
<comment type="miscellaneous">
    <text>According to PubMed:18930082, TATA is detectable only in minor amounts in Arabidopsis chloroplasts.</text>
</comment>
<comment type="similarity">
    <text evidence="6">Belongs to the TatC family.</text>
</comment>
<keyword id="KW-0150">Chloroplast</keyword>
<keyword id="KW-0472">Membrane</keyword>
<keyword id="KW-0934">Plastid</keyword>
<keyword id="KW-0653">Protein transport</keyword>
<keyword id="KW-1185">Reference proteome</keyword>
<keyword id="KW-0793">Thylakoid</keyword>
<keyword id="KW-0809">Transit peptide</keyword>
<keyword id="KW-0811">Translocation</keyword>
<keyword id="KW-0812">Transmembrane</keyword>
<keyword id="KW-1133">Transmembrane helix</keyword>
<keyword id="KW-0813">Transport</keyword>